<accession>B6EGG3</accession>
<evidence type="ECO:0000255" key="1">
    <source>
        <dbReference type="HAMAP-Rule" id="MF_01192"/>
    </source>
</evidence>
<feature type="chain" id="PRO_1000138377" description="Flap endonuclease Xni">
    <location>
        <begin position="1"/>
        <end position="257"/>
    </location>
</feature>
<feature type="domain" description="5'-3' exonuclease" evidence="1">
    <location>
        <begin position="165"/>
        <end position="255"/>
    </location>
</feature>
<feature type="region of interest" description="Interaction with DNA" evidence="1">
    <location>
        <begin position="189"/>
        <end position="194"/>
    </location>
</feature>
<feature type="binding site" evidence="1">
    <location>
        <position position="109"/>
    </location>
    <ligand>
        <name>Mg(2+)</name>
        <dbReference type="ChEBI" id="CHEBI:18420"/>
    </ligand>
</feature>
<feature type="binding site" evidence="1">
    <location>
        <position position="176"/>
    </location>
    <ligand>
        <name>K(+)</name>
        <dbReference type="ChEBI" id="CHEBI:29103"/>
    </ligand>
</feature>
<feature type="binding site" evidence="1">
    <location>
        <position position="177"/>
    </location>
    <ligand>
        <name>K(+)</name>
        <dbReference type="ChEBI" id="CHEBI:29103"/>
    </ligand>
</feature>
<feature type="binding site" evidence="1">
    <location>
        <position position="187"/>
    </location>
    <ligand>
        <name>K(+)</name>
        <dbReference type="ChEBI" id="CHEBI:29103"/>
    </ligand>
</feature>
<feature type="binding site" evidence="1">
    <location>
        <position position="190"/>
    </location>
    <ligand>
        <name>K(+)</name>
        <dbReference type="ChEBI" id="CHEBI:29103"/>
    </ligand>
</feature>
<name>XNI_ALISL</name>
<protein>
    <recommendedName>
        <fullName evidence="1">Flap endonuclease Xni</fullName>
        <shortName evidence="1">FEN</shortName>
        <ecNumber evidence="1">3.1.-.-</ecNumber>
    </recommendedName>
</protein>
<organism>
    <name type="scientific">Aliivibrio salmonicida (strain LFI1238)</name>
    <name type="common">Vibrio salmonicida (strain LFI1238)</name>
    <dbReference type="NCBI Taxonomy" id="316275"/>
    <lineage>
        <taxon>Bacteria</taxon>
        <taxon>Pseudomonadati</taxon>
        <taxon>Pseudomonadota</taxon>
        <taxon>Gammaproteobacteria</taxon>
        <taxon>Vibrionales</taxon>
        <taxon>Vibrionaceae</taxon>
        <taxon>Aliivibrio</taxon>
    </lineage>
</organism>
<keyword id="KW-0238">DNA-binding</keyword>
<keyword id="KW-0255">Endonuclease</keyword>
<keyword id="KW-0378">Hydrolase</keyword>
<keyword id="KW-0460">Magnesium</keyword>
<keyword id="KW-0479">Metal-binding</keyword>
<keyword id="KW-0540">Nuclease</keyword>
<keyword id="KW-0630">Potassium</keyword>
<proteinExistence type="inferred from homology"/>
<gene>
    <name evidence="1" type="primary">xni</name>
    <name evidence="1" type="synonym">ygdG</name>
    <name type="ordered locus">VSAL_I0694</name>
</gene>
<sequence>MAIHLVIIDALNLIRRVHSAQPNQDDIQAVVTTTGRTINRILKETEPTHIIAVFDHHLQDRGWRAEVLPKYKEDRKPMPEALQKGMDAIQESWWKLGIDSLLSDGDEADDLVATLANKVASRNEQVTIVSTDKGYCQLLSPTLRIRDYFQHRWLDEPFIEKEFGLKPEQLADYWGLAGISSSKITGIPGIGPKAALEILTQFPTIEAANESDELPKKYRKKFDEYYNTAILCRKVAGLRTDIELGFNLQDIRYEKPE</sequence>
<comment type="function">
    <text evidence="1">Has flap endonuclease activity. During DNA replication, flap endonucleases cleave the 5'-overhanging flap structure that is generated by displacement synthesis when DNA polymerase encounters the 5'-end of a downstream Okazaki fragment.</text>
</comment>
<comment type="cofactor">
    <cofactor evidence="1">
        <name>Mg(2+)</name>
        <dbReference type="ChEBI" id="CHEBI:18420"/>
    </cofactor>
    <text evidence="1">Binds 2 Mg(2+) per subunit. Only one magnesium ion has a direct interaction with the protein, the other interactions are indirect.</text>
</comment>
<comment type="cofactor">
    <cofactor evidence="1">
        <name>K(+)</name>
        <dbReference type="ChEBI" id="CHEBI:29103"/>
    </cofactor>
    <text evidence="1">Binds 1 K(+) per subunit. The potassium ion strongly increases the affinity for DNA.</text>
</comment>
<comment type="similarity">
    <text evidence="1">Belongs to the Xni family.</text>
</comment>
<reference key="1">
    <citation type="journal article" date="2008" name="BMC Genomics">
        <title>The genome sequence of the fish pathogen Aliivibrio salmonicida strain LFI1238 shows extensive evidence of gene decay.</title>
        <authorList>
            <person name="Hjerde E."/>
            <person name="Lorentzen M.S."/>
            <person name="Holden M.T."/>
            <person name="Seeger K."/>
            <person name="Paulsen S."/>
            <person name="Bason N."/>
            <person name="Churcher C."/>
            <person name="Harris D."/>
            <person name="Norbertczak H."/>
            <person name="Quail M.A."/>
            <person name="Sanders S."/>
            <person name="Thurston S."/>
            <person name="Parkhill J."/>
            <person name="Willassen N.P."/>
            <person name="Thomson N.R."/>
        </authorList>
    </citation>
    <scope>NUCLEOTIDE SEQUENCE [LARGE SCALE GENOMIC DNA]</scope>
    <source>
        <strain>LFI1238</strain>
    </source>
</reference>
<dbReference type="EC" id="3.1.-.-" evidence="1"/>
<dbReference type="EMBL" id="FM178379">
    <property type="protein sequence ID" value="CAQ78379.1"/>
    <property type="molecule type" value="Genomic_DNA"/>
</dbReference>
<dbReference type="RefSeq" id="WP_012549499.1">
    <property type="nucleotide sequence ID" value="NC_011312.1"/>
</dbReference>
<dbReference type="SMR" id="B6EGG3"/>
<dbReference type="KEGG" id="vsa:VSAL_I0694"/>
<dbReference type="eggNOG" id="COG0258">
    <property type="taxonomic scope" value="Bacteria"/>
</dbReference>
<dbReference type="HOGENOM" id="CLU_004675_1_2_6"/>
<dbReference type="Proteomes" id="UP000001730">
    <property type="component" value="Chromosome 1"/>
</dbReference>
<dbReference type="GO" id="GO:0008409">
    <property type="term" value="F:5'-3' exonuclease activity"/>
    <property type="evidence" value="ECO:0007669"/>
    <property type="project" value="InterPro"/>
</dbReference>
<dbReference type="GO" id="GO:0017108">
    <property type="term" value="F:5'-flap endonuclease activity"/>
    <property type="evidence" value="ECO:0007669"/>
    <property type="project" value="UniProtKB-UniRule"/>
</dbReference>
<dbReference type="GO" id="GO:0003677">
    <property type="term" value="F:DNA binding"/>
    <property type="evidence" value="ECO:0007669"/>
    <property type="project" value="UniProtKB-UniRule"/>
</dbReference>
<dbReference type="GO" id="GO:0000287">
    <property type="term" value="F:magnesium ion binding"/>
    <property type="evidence" value="ECO:0007669"/>
    <property type="project" value="UniProtKB-UniRule"/>
</dbReference>
<dbReference type="GO" id="GO:0030955">
    <property type="term" value="F:potassium ion binding"/>
    <property type="evidence" value="ECO:0007669"/>
    <property type="project" value="UniProtKB-UniRule"/>
</dbReference>
<dbReference type="GO" id="GO:0033567">
    <property type="term" value="P:DNA replication, Okazaki fragment processing"/>
    <property type="evidence" value="ECO:0007669"/>
    <property type="project" value="UniProtKB-UniRule"/>
</dbReference>
<dbReference type="CDD" id="cd09898">
    <property type="entry name" value="H3TH_53EXO"/>
    <property type="match status" value="1"/>
</dbReference>
<dbReference type="CDD" id="cd09859">
    <property type="entry name" value="PIN_53EXO"/>
    <property type="match status" value="1"/>
</dbReference>
<dbReference type="FunFam" id="1.10.150.20:FF:000003">
    <property type="entry name" value="DNA polymerase I"/>
    <property type="match status" value="1"/>
</dbReference>
<dbReference type="Gene3D" id="1.10.150.20">
    <property type="entry name" value="5' to 3' exonuclease, C-terminal subdomain"/>
    <property type="match status" value="1"/>
</dbReference>
<dbReference type="Gene3D" id="3.40.50.1010">
    <property type="entry name" value="5'-nuclease"/>
    <property type="match status" value="1"/>
</dbReference>
<dbReference type="HAMAP" id="MF_01192">
    <property type="entry name" value="Xni"/>
    <property type="match status" value="1"/>
</dbReference>
<dbReference type="InterPro" id="IPR020046">
    <property type="entry name" value="5-3_exonucl_a-hlix_arch_N"/>
</dbReference>
<dbReference type="InterPro" id="IPR002421">
    <property type="entry name" value="5-3_exonuclease"/>
</dbReference>
<dbReference type="InterPro" id="IPR036279">
    <property type="entry name" value="5-3_exonuclease_C_sf"/>
</dbReference>
<dbReference type="InterPro" id="IPR020045">
    <property type="entry name" value="DNA_polI_H3TH"/>
</dbReference>
<dbReference type="InterPro" id="IPR038969">
    <property type="entry name" value="FEN"/>
</dbReference>
<dbReference type="InterPro" id="IPR008918">
    <property type="entry name" value="HhH2"/>
</dbReference>
<dbReference type="InterPro" id="IPR029060">
    <property type="entry name" value="PIN-like_dom_sf"/>
</dbReference>
<dbReference type="InterPro" id="IPR022895">
    <property type="entry name" value="Xni"/>
</dbReference>
<dbReference type="NCBIfam" id="NF007017">
    <property type="entry name" value="PRK09482.1"/>
    <property type="match status" value="1"/>
</dbReference>
<dbReference type="PANTHER" id="PTHR42646:SF2">
    <property type="entry name" value="5'-3' EXONUCLEASE FAMILY PROTEIN"/>
    <property type="match status" value="1"/>
</dbReference>
<dbReference type="PANTHER" id="PTHR42646">
    <property type="entry name" value="FLAP ENDONUCLEASE XNI"/>
    <property type="match status" value="1"/>
</dbReference>
<dbReference type="Pfam" id="PF01367">
    <property type="entry name" value="5_3_exonuc"/>
    <property type="match status" value="1"/>
</dbReference>
<dbReference type="Pfam" id="PF02739">
    <property type="entry name" value="5_3_exonuc_N"/>
    <property type="match status" value="1"/>
</dbReference>
<dbReference type="SMART" id="SM00475">
    <property type="entry name" value="53EXOc"/>
    <property type="match status" value="1"/>
</dbReference>
<dbReference type="SMART" id="SM00279">
    <property type="entry name" value="HhH2"/>
    <property type="match status" value="1"/>
</dbReference>
<dbReference type="SUPFAM" id="SSF47807">
    <property type="entry name" value="5' to 3' exonuclease, C-terminal subdomain"/>
    <property type="match status" value="1"/>
</dbReference>
<dbReference type="SUPFAM" id="SSF88723">
    <property type="entry name" value="PIN domain-like"/>
    <property type="match status" value="1"/>
</dbReference>